<keyword id="KW-1185">Reference proteome</keyword>
<feature type="chain" id="PRO_0000049493" description="Uncharacterized protein YdcS">
    <location>
        <begin position="1"/>
        <end position="89"/>
    </location>
</feature>
<accession>P96636</accession>
<protein>
    <recommendedName>
        <fullName>Uncharacterized protein YdcS</fullName>
    </recommendedName>
</protein>
<dbReference type="EMBL" id="AB001488">
    <property type="protein sequence ID" value="BAA19325.1"/>
    <property type="molecule type" value="Genomic_DNA"/>
</dbReference>
<dbReference type="EMBL" id="AL009126">
    <property type="protein sequence ID" value="CAB12295.1"/>
    <property type="molecule type" value="Genomic_DNA"/>
</dbReference>
<dbReference type="PIR" id="H69774">
    <property type="entry name" value="H69774"/>
</dbReference>
<dbReference type="RefSeq" id="NP_388369.1">
    <property type="nucleotide sequence ID" value="NC_000964.3"/>
</dbReference>
<dbReference type="RefSeq" id="WP_009966623.1">
    <property type="nucleotide sequence ID" value="NZ_OZ025638.1"/>
</dbReference>
<dbReference type="SMR" id="P96636"/>
<dbReference type="FunCoup" id="P96636">
    <property type="interactions" value="219"/>
</dbReference>
<dbReference type="STRING" id="224308.BSU04880"/>
<dbReference type="PaxDb" id="224308-BSU04880"/>
<dbReference type="EnsemblBacteria" id="CAB12295">
    <property type="protein sequence ID" value="CAB12295"/>
    <property type="gene ID" value="BSU_04880"/>
</dbReference>
<dbReference type="GeneID" id="938148"/>
<dbReference type="KEGG" id="bsu:BSU04880"/>
<dbReference type="PATRIC" id="fig|224308.179.peg.519"/>
<dbReference type="InParanoid" id="P96636"/>
<dbReference type="OrthoDB" id="2907467at2"/>
<dbReference type="BioCyc" id="BSUB:BSU04880-MONOMER"/>
<dbReference type="Proteomes" id="UP000001570">
    <property type="component" value="Chromosome"/>
</dbReference>
<organism>
    <name type="scientific">Bacillus subtilis (strain 168)</name>
    <dbReference type="NCBI Taxonomy" id="224308"/>
    <lineage>
        <taxon>Bacteria</taxon>
        <taxon>Bacillati</taxon>
        <taxon>Bacillota</taxon>
        <taxon>Bacilli</taxon>
        <taxon>Bacillales</taxon>
        <taxon>Bacillaceae</taxon>
        <taxon>Bacillus</taxon>
    </lineage>
</organism>
<name>YDCS_BACSU</name>
<proteinExistence type="predicted"/>
<gene>
    <name type="primary">ydcS</name>
    <name type="ordered locus">BSU04880</name>
</gene>
<sequence length="89" mass="10276">MHNVNLLNQAGLENALESVGCLDIVEDLIEKMQEYVLYHTETAERFAIDIFTVVNNYTKKVHAIFNVLENEDGETNVKNVEFEVMHFTE</sequence>
<reference key="1">
    <citation type="submission" date="1997-03" db="EMBL/GenBank/DDBJ databases">
        <title>A 148 kbp sequence of the region between 35 and 47 degree of the Bacillus subtilis genome.</title>
        <authorList>
            <person name="Kasahara Y."/>
            <person name="Nakai S."/>
            <person name="Lee S."/>
            <person name="Sadaie Y."/>
            <person name="Ogasawara N."/>
        </authorList>
    </citation>
    <scope>NUCLEOTIDE SEQUENCE [GENOMIC DNA]</scope>
    <source>
        <strain>168</strain>
    </source>
</reference>
<reference key="2">
    <citation type="journal article" date="1997" name="Nature">
        <title>The complete genome sequence of the Gram-positive bacterium Bacillus subtilis.</title>
        <authorList>
            <person name="Kunst F."/>
            <person name="Ogasawara N."/>
            <person name="Moszer I."/>
            <person name="Albertini A.M."/>
            <person name="Alloni G."/>
            <person name="Azevedo V."/>
            <person name="Bertero M.G."/>
            <person name="Bessieres P."/>
            <person name="Bolotin A."/>
            <person name="Borchert S."/>
            <person name="Borriss R."/>
            <person name="Boursier L."/>
            <person name="Brans A."/>
            <person name="Braun M."/>
            <person name="Brignell S.C."/>
            <person name="Bron S."/>
            <person name="Brouillet S."/>
            <person name="Bruschi C.V."/>
            <person name="Caldwell B."/>
            <person name="Capuano V."/>
            <person name="Carter N.M."/>
            <person name="Choi S.-K."/>
            <person name="Codani J.-J."/>
            <person name="Connerton I.F."/>
            <person name="Cummings N.J."/>
            <person name="Daniel R.A."/>
            <person name="Denizot F."/>
            <person name="Devine K.M."/>
            <person name="Duesterhoeft A."/>
            <person name="Ehrlich S.D."/>
            <person name="Emmerson P.T."/>
            <person name="Entian K.-D."/>
            <person name="Errington J."/>
            <person name="Fabret C."/>
            <person name="Ferrari E."/>
            <person name="Foulger D."/>
            <person name="Fritz C."/>
            <person name="Fujita M."/>
            <person name="Fujita Y."/>
            <person name="Fuma S."/>
            <person name="Galizzi A."/>
            <person name="Galleron N."/>
            <person name="Ghim S.-Y."/>
            <person name="Glaser P."/>
            <person name="Goffeau A."/>
            <person name="Golightly E.J."/>
            <person name="Grandi G."/>
            <person name="Guiseppi G."/>
            <person name="Guy B.J."/>
            <person name="Haga K."/>
            <person name="Haiech J."/>
            <person name="Harwood C.R."/>
            <person name="Henaut A."/>
            <person name="Hilbert H."/>
            <person name="Holsappel S."/>
            <person name="Hosono S."/>
            <person name="Hullo M.-F."/>
            <person name="Itaya M."/>
            <person name="Jones L.-M."/>
            <person name="Joris B."/>
            <person name="Karamata D."/>
            <person name="Kasahara Y."/>
            <person name="Klaerr-Blanchard M."/>
            <person name="Klein C."/>
            <person name="Kobayashi Y."/>
            <person name="Koetter P."/>
            <person name="Koningstein G."/>
            <person name="Krogh S."/>
            <person name="Kumano M."/>
            <person name="Kurita K."/>
            <person name="Lapidus A."/>
            <person name="Lardinois S."/>
            <person name="Lauber J."/>
            <person name="Lazarevic V."/>
            <person name="Lee S.-M."/>
            <person name="Levine A."/>
            <person name="Liu H."/>
            <person name="Masuda S."/>
            <person name="Mauel C."/>
            <person name="Medigue C."/>
            <person name="Medina N."/>
            <person name="Mellado R.P."/>
            <person name="Mizuno M."/>
            <person name="Moestl D."/>
            <person name="Nakai S."/>
            <person name="Noback M."/>
            <person name="Noone D."/>
            <person name="O'Reilly M."/>
            <person name="Ogawa K."/>
            <person name="Ogiwara A."/>
            <person name="Oudega B."/>
            <person name="Park S.-H."/>
            <person name="Parro V."/>
            <person name="Pohl T.M."/>
            <person name="Portetelle D."/>
            <person name="Porwollik S."/>
            <person name="Prescott A.M."/>
            <person name="Presecan E."/>
            <person name="Pujic P."/>
            <person name="Purnelle B."/>
            <person name="Rapoport G."/>
            <person name="Rey M."/>
            <person name="Reynolds S."/>
            <person name="Rieger M."/>
            <person name="Rivolta C."/>
            <person name="Rocha E."/>
            <person name="Roche B."/>
            <person name="Rose M."/>
            <person name="Sadaie Y."/>
            <person name="Sato T."/>
            <person name="Scanlan E."/>
            <person name="Schleich S."/>
            <person name="Schroeter R."/>
            <person name="Scoffone F."/>
            <person name="Sekiguchi J."/>
            <person name="Sekowska A."/>
            <person name="Seror S.J."/>
            <person name="Serror P."/>
            <person name="Shin B.-S."/>
            <person name="Soldo B."/>
            <person name="Sorokin A."/>
            <person name="Tacconi E."/>
            <person name="Takagi T."/>
            <person name="Takahashi H."/>
            <person name="Takemaru K."/>
            <person name="Takeuchi M."/>
            <person name="Tamakoshi A."/>
            <person name="Tanaka T."/>
            <person name="Terpstra P."/>
            <person name="Tognoni A."/>
            <person name="Tosato V."/>
            <person name="Uchiyama S."/>
            <person name="Vandenbol M."/>
            <person name="Vannier F."/>
            <person name="Vassarotti A."/>
            <person name="Viari A."/>
            <person name="Wambutt R."/>
            <person name="Wedler E."/>
            <person name="Wedler H."/>
            <person name="Weitzenegger T."/>
            <person name="Winters P."/>
            <person name="Wipat A."/>
            <person name="Yamamoto H."/>
            <person name="Yamane K."/>
            <person name="Yasumoto K."/>
            <person name="Yata K."/>
            <person name="Yoshida K."/>
            <person name="Yoshikawa H.-F."/>
            <person name="Zumstein E."/>
            <person name="Yoshikawa H."/>
            <person name="Danchin A."/>
        </authorList>
    </citation>
    <scope>NUCLEOTIDE SEQUENCE [LARGE SCALE GENOMIC DNA]</scope>
    <source>
        <strain>168</strain>
    </source>
</reference>